<dbReference type="EMBL" id="AF157706">
    <property type="protein sequence ID" value="AAB06342.1"/>
    <property type="molecule type" value="Genomic_DNA"/>
</dbReference>
<dbReference type="PIR" id="T44004">
    <property type="entry name" value="T44004"/>
</dbReference>
<dbReference type="RefSeq" id="NP_050225.1">
    <property type="nucleotide sequence ID" value="NC_000898.1"/>
</dbReference>
<dbReference type="DNASU" id="1497046"/>
<dbReference type="GeneID" id="1497046"/>
<dbReference type="KEGG" id="vg:1497046"/>
<dbReference type="Proteomes" id="UP000006930">
    <property type="component" value="Segment"/>
</dbReference>
<dbReference type="GO" id="GO:0044177">
    <property type="term" value="C:host cell Golgi apparatus"/>
    <property type="evidence" value="ECO:0007669"/>
    <property type="project" value="UniProtKB-SubCell"/>
</dbReference>
<dbReference type="GO" id="GO:0019033">
    <property type="term" value="C:viral tegument"/>
    <property type="evidence" value="ECO:0007669"/>
    <property type="project" value="UniProtKB-SubCell"/>
</dbReference>
<dbReference type="InterPro" id="IPR007619">
    <property type="entry name" value="Herpes_U44"/>
</dbReference>
<dbReference type="Pfam" id="PF04533">
    <property type="entry name" value="Herpes_U44"/>
    <property type="match status" value="1"/>
</dbReference>
<evidence type="ECO:0000250" key="1">
    <source>
        <dbReference type="UniProtKB" id="P10235"/>
    </source>
</evidence>
<evidence type="ECO:0000250" key="2">
    <source>
        <dbReference type="UniProtKB" id="P16823"/>
    </source>
</evidence>
<evidence type="ECO:0000305" key="3"/>
<proteinExistence type="inferred from homology"/>
<name>TEG7_HHV6Z</name>
<sequence length="231" mass="26151">MPLGYWGVMGNCFRRLSLFGQPTQANYEMLCSSDDLESEELTYFLDMTYKDFGVYQNDIISHQKDTETMKTLLGLLPMYKKTKLRHTIMERCLSNCPNHVKDALCVELMKAEKILQTMDVVFMKTLIGEFSMCTDNLNQLLNKFATDQSTLSDVEKINSLIEIDGENSKRLLVELDPILHEETGLYQALPNVVTEAPSEKVKSIHVESEGESVWSSVTEGGIMKQEKGTGV</sequence>
<organism>
    <name type="scientific">Human herpesvirus 6B (strain Z29)</name>
    <name type="common">HHV-6 variant B</name>
    <name type="synonym">Human B lymphotropic virus</name>
    <dbReference type="NCBI Taxonomy" id="36351"/>
    <lineage>
        <taxon>Viruses</taxon>
        <taxon>Duplodnaviria</taxon>
        <taxon>Heunggongvirae</taxon>
        <taxon>Peploviricota</taxon>
        <taxon>Herviviricetes</taxon>
        <taxon>Herpesvirales</taxon>
        <taxon>Orthoherpesviridae</taxon>
        <taxon>Betaherpesvirinae</taxon>
        <taxon>Roseolovirus</taxon>
        <taxon>Roseolovirus humanbeta6b</taxon>
        <taxon>Human herpesvirus 6B</taxon>
    </lineage>
</organism>
<protein>
    <recommendedName>
        <fullName>Tegument protein UL51 homolog</fullName>
    </recommendedName>
</protein>
<reference key="1">
    <citation type="journal article" date="1995" name="J. Virol.">
        <title>Intragenomic linear amplification of human herpesvirus 6B oriLyt suggests acquisition of oriLyt by transposition.</title>
        <authorList>
            <person name="Stamey F.R."/>
            <person name="Dominguez G."/>
            <person name="Black J.B."/>
            <person name="Dambaugh T.R."/>
            <person name="Pellett P.E."/>
        </authorList>
    </citation>
    <scope>NUCLEOTIDE SEQUENCE [GENOMIC DNA]</scope>
</reference>
<reference key="2">
    <citation type="journal article" date="1999" name="J. Virol.">
        <title>Human herpesvirus 6B genome sequence: coding content and comparison with human herpesvirus 6A.</title>
        <authorList>
            <person name="Dominguez G."/>
            <person name="Dambaugh T.R."/>
            <person name="Stamey F.R."/>
            <person name="Dewhurst S."/>
            <person name="Inoue N."/>
            <person name="Pellett P.E."/>
        </authorList>
    </citation>
    <scope>NUCLEOTIDE SEQUENCE [LARGE SCALE GENOMIC DNA]</scope>
</reference>
<gene>
    <name type="primary">U44</name>
    <name type="synonym">KA5R</name>
</gene>
<accession>P52546</accession>
<keyword id="KW-1035">Host cytoplasm</keyword>
<keyword id="KW-1040">Host Golgi apparatus</keyword>
<keyword id="KW-0449">Lipoprotein</keyword>
<keyword id="KW-0564">Palmitate</keyword>
<keyword id="KW-0597">Phosphoprotein</keyword>
<keyword id="KW-1185">Reference proteome</keyword>
<keyword id="KW-0946">Virion</keyword>
<keyword id="KW-0920">Virion tegument</keyword>
<organismHost>
    <name type="scientific">Homo sapiens</name>
    <name type="common">Human</name>
    <dbReference type="NCBI Taxonomy" id="9606"/>
</organismHost>
<comment type="function">
    <text evidence="1">Plays several roles during the time course of infection, including egress of virus particles from the perinuclear space and secondary envelopment of cytoplasmic capsids that bud into specific trans-Golgi network (TGN)-derived membranes.</text>
</comment>
<comment type="subunit">
    <text evidence="1 2">Oligomerizes. Interacts with U75; this interaction mediates U75 incorporation to virions.</text>
</comment>
<comment type="subcellular location">
    <subcellularLocation>
        <location evidence="1">Virion tegument</location>
    </subcellularLocation>
    <subcellularLocation>
        <location evidence="1">Host cytoplasm</location>
    </subcellularLocation>
    <subcellularLocation>
        <location evidence="1">Host Golgi apparatus</location>
    </subcellularLocation>
</comment>
<comment type="PTM">
    <text evidence="1">Phosphorylated.</text>
</comment>
<comment type="PTM">
    <text evidence="1">Palmitoylation is necessary for Golgi localization.</text>
</comment>
<comment type="similarity">
    <text evidence="3">Belongs to the herpesviridae UL51 family.</text>
</comment>
<feature type="chain" id="PRO_0000116210" description="Tegument protein UL51 homolog">
    <location>
        <begin position="1"/>
        <end position="231"/>
    </location>
</feature>
<feature type="lipid moiety-binding region" description="S-palmitoyl cysteine; by host" evidence="1">
    <location>
        <position position="12"/>
    </location>
</feature>